<dbReference type="EC" id="1.14.99.60" evidence="1"/>
<dbReference type="EMBL" id="CP000124">
    <property type="protein sequence ID" value="ABA50422.1"/>
    <property type="molecule type" value="Genomic_DNA"/>
</dbReference>
<dbReference type="RefSeq" id="WP_004527787.1">
    <property type="nucleotide sequence ID" value="NC_007434.1"/>
</dbReference>
<dbReference type="SMR" id="Q3JNC9"/>
<dbReference type="EnsemblBacteria" id="ABA50422">
    <property type="protein sequence ID" value="ABA50422"/>
    <property type="gene ID" value="BURPS1710b_3554"/>
</dbReference>
<dbReference type="KEGG" id="bpm:BURPS1710b_3554"/>
<dbReference type="HOGENOM" id="CLU_088601_0_0_4"/>
<dbReference type="UniPathway" id="UPA00232"/>
<dbReference type="Proteomes" id="UP000002700">
    <property type="component" value="Chromosome I"/>
</dbReference>
<dbReference type="GO" id="GO:0005886">
    <property type="term" value="C:plasma membrane"/>
    <property type="evidence" value="ECO:0007669"/>
    <property type="project" value="UniProtKB-SubCell"/>
</dbReference>
<dbReference type="GO" id="GO:0008682">
    <property type="term" value="F:3-demethoxyubiquinol 3-hydroxylase activity"/>
    <property type="evidence" value="ECO:0007669"/>
    <property type="project" value="UniProtKB-EC"/>
</dbReference>
<dbReference type="GO" id="GO:0046872">
    <property type="term" value="F:metal ion binding"/>
    <property type="evidence" value="ECO:0007669"/>
    <property type="project" value="UniProtKB-KW"/>
</dbReference>
<dbReference type="GO" id="GO:0006744">
    <property type="term" value="P:ubiquinone biosynthetic process"/>
    <property type="evidence" value="ECO:0007669"/>
    <property type="project" value="UniProtKB-UniRule"/>
</dbReference>
<dbReference type="CDD" id="cd01042">
    <property type="entry name" value="DMQH"/>
    <property type="match status" value="1"/>
</dbReference>
<dbReference type="Gene3D" id="1.20.1260.10">
    <property type="match status" value="1"/>
</dbReference>
<dbReference type="HAMAP" id="MF_01658">
    <property type="entry name" value="COQ7"/>
    <property type="match status" value="1"/>
</dbReference>
<dbReference type="InterPro" id="IPR047809">
    <property type="entry name" value="COQ7_proteobact"/>
</dbReference>
<dbReference type="InterPro" id="IPR012347">
    <property type="entry name" value="Ferritin-like"/>
</dbReference>
<dbReference type="InterPro" id="IPR009078">
    <property type="entry name" value="Ferritin-like_SF"/>
</dbReference>
<dbReference type="InterPro" id="IPR011566">
    <property type="entry name" value="Ubq_synth_Coq7"/>
</dbReference>
<dbReference type="NCBIfam" id="NF033656">
    <property type="entry name" value="DMQ_monoox_COQ7"/>
    <property type="match status" value="1"/>
</dbReference>
<dbReference type="PANTHER" id="PTHR11237:SF4">
    <property type="entry name" value="5-DEMETHOXYUBIQUINONE HYDROXYLASE, MITOCHONDRIAL"/>
    <property type="match status" value="1"/>
</dbReference>
<dbReference type="PANTHER" id="PTHR11237">
    <property type="entry name" value="COENZYME Q10 BIOSYNTHESIS PROTEIN 7"/>
    <property type="match status" value="1"/>
</dbReference>
<dbReference type="Pfam" id="PF03232">
    <property type="entry name" value="COQ7"/>
    <property type="match status" value="1"/>
</dbReference>
<dbReference type="SUPFAM" id="SSF47240">
    <property type="entry name" value="Ferritin-like"/>
    <property type="match status" value="1"/>
</dbReference>
<protein>
    <recommendedName>
        <fullName evidence="1">3-demethoxyubiquinol 3-hydroxylase</fullName>
        <shortName evidence="1">DMQ hydroxylase</shortName>
        <ecNumber evidence="1">1.14.99.60</ecNumber>
    </recommendedName>
    <alternativeName>
        <fullName evidence="1">2-nonaprenyl-3-methyl-6-methoxy-1,4-benzoquinol hydroxylase</fullName>
    </alternativeName>
</protein>
<comment type="function">
    <text evidence="1">Catalyzes the hydroxylation of 2-nonaprenyl-3-methyl-6-methoxy-1,4-benzoquinol during ubiquinone biosynthesis.</text>
</comment>
<comment type="catalytic activity">
    <reaction evidence="1">
        <text>a 5-methoxy-2-methyl-3-(all-trans-polyprenyl)benzene-1,4-diol + AH2 + O2 = a 3-demethylubiquinol + A + H2O</text>
        <dbReference type="Rhea" id="RHEA:50908"/>
        <dbReference type="Rhea" id="RHEA-COMP:10859"/>
        <dbReference type="Rhea" id="RHEA-COMP:10914"/>
        <dbReference type="ChEBI" id="CHEBI:13193"/>
        <dbReference type="ChEBI" id="CHEBI:15377"/>
        <dbReference type="ChEBI" id="CHEBI:15379"/>
        <dbReference type="ChEBI" id="CHEBI:17499"/>
        <dbReference type="ChEBI" id="CHEBI:84167"/>
        <dbReference type="ChEBI" id="CHEBI:84422"/>
        <dbReference type="EC" id="1.14.99.60"/>
    </reaction>
</comment>
<comment type="cofactor">
    <cofactor evidence="1">
        <name>Fe cation</name>
        <dbReference type="ChEBI" id="CHEBI:24875"/>
    </cofactor>
    <text evidence="1">Binds 2 iron ions per subunit.</text>
</comment>
<comment type="pathway">
    <text evidence="1">Cofactor biosynthesis; ubiquinone biosynthesis.</text>
</comment>
<comment type="subcellular location">
    <subcellularLocation>
        <location evidence="1">Cell membrane</location>
        <topology evidence="1">Peripheral membrane protein</topology>
    </subcellularLocation>
</comment>
<comment type="similarity">
    <text evidence="1">Belongs to the COQ7 family.</text>
</comment>
<gene>
    <name evidence="1" type="primary">coq7</name>
    <name type="ordered locus">BURPS1710b_3554</name>
</gene>
<feature type="chain" id="PRO_0000338672" description="3-demethoxyubiquinol 3-hydroxylase">
    <location>
        <begin position="1"/>
        <end position="208"/>
    </location>
</feature>
<feature type="binding site" evidence="1">
    <location>
        <position position="57"/>
    </location>
    <ligand>
        <name>Fe cation</name>
        <dbReference type="ChEBI" id="CHEBI:24875"/>
        <label>1</label>
    </ligand>
</feature>
<feature type="binding site" evidence="1">
    <location>
        <position position="87"/>
    </location>
    <ligand>
        <name>Fe cation</name>
        <dbReference type="ChEBI" id="CHEBI:24875"/>
        <label>1</label>
    </ligand>
</feature>
<feature type="binding site" evidence="1">
    <location>
        <position position="87"/>
    </location>
    <ligand>
        <name>Fe cation</name>
        <dbReference type="ChEBI" id="CHEBI:24875"/>
        <label>2</label>
    </ligand>
</feature>
<feature type="binding site" evidence="1">
    <location>
        <position position="90"/>
    </location>
    <ligand>
        <name>Fe cation</name>
        <dbReference type="ChEBI" id="CHEBI:24875"/>
        <label>1</label>
    </ligand>
</feature>
<feature type="binding site" evidence="1">
    <location>
        <position position="139"/>
    </location>
    <ligand>
        <name>Fe cation</name>
        <dbReference type="ChEBI" id="CHEBI:24875"/>
        <label>2</label>
    </ligand>
</feature>
<feature type="binding site" evidence="1">
    <location>
        <position position="171"/>
    </location>
    <ligand>
        <name>Fe cation</name>
        <dbReference type="ChEBI" id="CHEBI:24875"/>
        <label>1</label>
    </ligand>
</feature>
<feature type="binding site" evidence="1">
    <location>
        <position position="171"/>
    </location>
    <ligand>
        <name>Fe cation</name>
        <dbReference type="ChEBI" id="CHEBI:24875"/>
        <label>2</label>
    </ligand>
</feature>
<feature type="binding site" evidence="1">
    <location>
        <position position="174"/>
    </location>
    <ligand>
        <name>Fe cation</name>
        <dbReference type="ChEBI" id="CHEBI:24875"/>
        <label>2</label>
    </ligand>
</feature>
<keyword id="KW-1003">Cell membrane</keyword>
<keyword id="KW-0408">Iron</keyword>
<keyword id="KW-0472">Membrane</keyword>
<keyword id="KW-0479">Metal-binding</keyword>
<keyword id="KW-0503">Monooxygenase</keyword>
<keyword id="KW-0560">Oxidoreductase</keyword>
<keyword id="KW-0831">Ubiquinone biosynthesis</keyword>
<accession>Q3JNC9</accession>
<sequence length="208" mass="22593">MVFDELITEFDRGLRSIAGVSRMSRPVPKPAAAAPAELSAAERKHAAGLMRVNHVGEVCAQALYQAQKLTTSSAGLKEMFEHAAREEEDHLAWTAHRLKDLDSRPSLLNPLWYAGALAIGVVAGRLGDKMSLGFMAETERQVESHLDGHLSELPAADVESRAIVEQMRADEVKHGKSATDAGGIELPMPARMLMRAASKVMTSTAYYL</sequence>
<organism>
    <name type="scientific">Burkholderia pseudomallei (strain 1710b)</name>
    <dbReference type="NCBI Taxonomy" id="320372"/>
    <lineage>
        <taxon>Bacteria</taxon>
        <taxon>Pseudomonadati</taxon>
        <taxon>Pseudomonadota</taxon>
        <taxon>Betaproteobacteria</taxon>
        <taxon>Burkholderiales</taxon>
        <taxon>Burkholderiaceae</taxon>
        <taxon>Burkholderia</taxon>
        <taxon>pseudomallei group</taxon>
    </lineage>
</organism>
<proteinExistence type="inferred from homology"/>
<reference key="1">
    <citation type="journal article" date="2010" name="Genome Biol. Evol.">
        <title>Continuing evolution of Burkholderia mallei through genome reduction and large-scale rearrangements.</title>
        <authorList>
            <person name="Losada L."/>
            <person name="Ronning C.M."/>
            <person name="DeShazer D."/>
            <person name="Woods D."/>
            <person name="Fedorova N."/>
            <person name="Kim H.S."/>
            <person name="Shabalina S.A."/>
            <person name="Pearson T.R."/>
            <person name="Brinkac L."/>
            <person name="Tan P."/>
            <person name="Nandi T."/>
            <person name="Crabtree J."/>
            <person name="Badger J."/>
            <person name="Beckstrom-Sternberg S."/>
            <person name="Saqib M."/>
            <person name="Schutzer S.E."/>
            <person name="Keim P."/>
            <person name="Nierman W.C."/>
        </authorList>
    </citation>
    <scope>NUCLEOTIDE SEQUENCE [LARGE SCALE GENOMIC DNA]</scope>
    <source>
        <strain>1710b</strain>
    </source>
</reference>
<name>COQ7_BURP1</name>
<evidence type="ECO:0000255" key="1">
    <source>
        <dbReference type="HAMAP-Rule" id="MF_01658"/>
    </source>
</evidence>